<dbReference type="EC" id="2.8.1.13" evidence="1"/>
<dbReference type="EMBL" id="FM211192">
    <property type="protein sequence ID" value="CAR71802.1"/>
    <property type="molecule type" value="Genomic_DNA"/>
</dbReference>
<dbReference type="SMR" id="B8ZS29"/>
<dbReference type="KEGG" id="mlb:MLBr01707"/>
<dbReference type="HOGENOM" id="CLU_035188_0_2_11"/>
<dbReference type="Proteomes" id="UP000006900">
    <property type="component" value="Chromosome"/>
</dbReference>
<dbReference type="GO" id="GO:0005737">
    <property type="term" value="C:cytoplasm"/>
    <property type="evidence" value="ECO:0007669"/>
    <property type="project" value="UniProtKB-SubCell"/>
</dbReference>
<dbReference type="GO" id="GO:0005524">
    <property type="term" value="F:ATP binding"/>
    <property type="evidence" value="ECO:0007669"/>
    <property type="project" value="UniProtKB-KW"/>
</dbReference>
<dbReference type="GO" id="GO:0000049">
    <property type="term" value="F:tRNA binding"/>
    <property type="evidence" value="ECO:0007669"/>
    <property type="project" value="UniProtKB-KW"/>
</dbReference>
<dbReference type="GO" id="GO:0103016">
    <property type="term" value="F:tRNA-uridine 2-sulfurtransferase activity"/>
    <property type="evidence" value="ECO:0007669"/>
    <property type="project" value="UniProtKB-EC"/>
</dbReference>
<dbReference type="GO" id="GO:0002143">
    <property type="term" value="P:tRNA wobble position uridine thiolation"/>
    <property type="evidence" value="ECO:0007669"/>
    <property type="project" value="TreeGrafter"/>
</dbReference>
<dbReference type="CDD" id="cd01998">
    <property type="entry name" value="MnmA_TRMU-like"/>
    <property type="match status" value="1"/>
</dbReference>
<dbReference type="FunFam" id="2.30.30.280:FF:000001">
    <property type="entry name" value="tRNA-specific 2-thiouridylase MnmA"/>
    <property type="match status" value="1"/>
</dbReference>
<dbReference type="FunFam" id="3.40.50.620:FF:000057">
    <property type="entry name" value="tRNA-specific 2-thiouridylase MnmA"/>
    <property type="match status" value="1"/>
</dbReference>
<dbReference type="Gene3D" id="2.30.30.280">
    <property type="entry name" value="Adenine nucleotide alpha hydrolases-like domains"/>
    <property type="match status" value="1"/>
</dbReference>
<dbReference type="Gene3D" id="3.40.50.620">
    <property type="entry name" value="HUPs"/>
    <property type="match status" value="1"/>
</dbReference>
<dbReference type="Gene3D" id="2.40.30.10">
    <property type="entry name" value="Translation factors"/>
    <property type="match status" value="1"/>
</dbReference>
<dbReference type="HAMAP" id="MF_00144">
    <property type="entry name" value="tRNA_thiouridyl_MnmA"/>
    <property type="match status" value="1"/>
</dbReference>
<dbReference type="InterPro" id="IPR004506">
    <property type="entry name" value="MnmA-like"/>
</dbReference>
<dbReference type="InterPro" id="IPR046885">
    <property type="entry name" value="MnmA-like_C"/>
</dbReference>
<dbReference type="InterPro" id="IPR046884">
    <property type="entry name" value="MnmA-like_central"/>
</dbReference>
<dbReference type="InterPro" id="IPR023382">
    <property type="entry name" value="MnmA-like_central_sf"/>
</dbReference>
<dbReference type="InterPro" id="IPR014729">
    <property type="entry name" value="Rossmann-like_a/b/a_fold"/>
</dbReference>
<dbReference type="NCBIfam" id="NF001138">
    <property type="entry name" value="PRK00143.1"/>
    <property type="match status" value="1"/>
</dbReference>
<dbReference type="NCBIfam" id="TIGR00420">
    <property type="entry name" value="trmU"/>
    <property type="match status" value="1"/>
</dbReference>
<dbReference type="PANTHER" id="PTHR11933:SF5">
    <property type="entry name" value="MITOCHONDRIAL TRNA-SPECIFIC 2-THIOURIDYLASE 1"/>
    <property type="match status" value="1"/>
</dbReference>
<dbReference type="PANTHER" id="PTHR11933">
    <property type="entry name" value="TRNA 5-METHYLAMINOMETHYL-2-THIOURIDYLATE -METHYLTRANSFERASE"/>
    <property type="match status" value="1"/>
</dbReference>
<dbReference type="Pfam" id="PF03054">
    <property type="entry name" value="tRNA_Me_trans"/>
    <property type="match status" value="1"/>
</dbReference>
<dbReference type="Pfam" id="PF20258">
    <property type="entry name" value="tRNA_Me_trans_C"/>
    <property type="match status" value="1"/>
</dbReference>
<dbReference type="Pfam" id="PF20259">
    <property type="entry name" value="tRNA_Me_trans_M"/>
    <property type="match status" value="1"/>
</dbReference>
<dbReference type="SUPFAM" id="SSF52402">
    <property type="entry name" value="Adenine nucleotide alpha hydrolases-like"/>
    <property type="match status" value="1"/>
</dbReference>
<gene>
    <name evidence="1" type="primary">mnmA</name>
    <name type="ordered locus">MLBr01707</name>
</gene>
<keyword id="KW-0067">ATP-binding</keyword>
<keyword id="KW-0963">Cytoplasm</keyword>
<keyword id="KW-1015">Disulfide bond</keyword>
<keyword id="KW-0547">Nucleotide-binding</keyword>
<keyword id="KW-0694">RNA-binding</keyword>
<keyword id="KW-0808">Transferase</keyword>
<keyword id="KW-0819">tRNA processing</keyword>
<keyword id="KW-0820">tRNA-binding</keyword>
<comment type="function">
    <text evidence="1">Catalyzes the 2-thiolation of uridine at the wobble position (U34) of tRNA, leading to the formation of s(2)U34.</text>
</comment>
<comment type="catalytic activity">
    <reaction evidence="1">
        <text>S-sulfanyl-L-cysteinyl-[protein] + uridine(34) in tRNA + AH2 + ATP = 2-thiouridine(34) in tRNA + L-cysteinyl-[protein] + A + AMP + diphosphate + H(+)</text>
        <dbReference type="Rhea" id="RHEA:47032"/>
        <dbReference type="Rhea" id="RHEA-COMP:10131"/>
        <dbReference type="Rhea" id="RHEA-COMP:11726"/>
        <dbReference type="Rhea" id="RHEA-COMP:11727"/>
        <dbReference type="Rhea" id="RHEA-COMP:11728"/>
        <dbReference type="ChEBI" id="CHEBI:13193"/>
        <dbReference type="ChEBI" id="CHEBI:15378"/>
        <dbReference type="ChEBI" id="CHEBI:17499"/>
        <dbReference type="ChEBI" id="CHEBI:29950"/>
        <dbReference type="ChEBI" id="CHEBI:30616"/>
        <dbReference type="ChEBI" id="CHEBI:33019"/>
        <dbReference type="ChEBI" id="CHEBI:61963"/>
        <dbReference type="ChEBI" id="CHEBI:65315"/>
        <dbReference type="ChEBI" id="CHEBI:87170"/>
        <dbReference type="ChEBI" id="CHEBI:456215"/>
        <dbReference type="EC" id="2.8.1.13"/>
    </reaction>
</comment>
<comment type="subcellular location">
    <subcellularLocation>
        <location evidence="1">Cytoplasm</location>
    </subcellularLocation>
</comment>
<comment type="similarity">
    <text evidence="1">Belongs to the MnmA/TRMU family.</text>
</comment>
<protein>
    <recommendedName>
        <fullName evidence="1">tRNA-specific 2-thiouridylase MnmA</fullName>
        <ecNumber evidence="1">2.8.1.13</ecNumber>
    </recommendedName>
</protein>
<name>MNMA_MYCLB</name>
<proteinExistence type="inferred from homology"/>
<sequence length="358" mass="37734">MKVLAAMSGGVDSSVAAARMVDAGHDVVGVHLALSTVSGTLRTGSRGCCSKEDVSDARRVADVLGIPFYVWDFAEKFQEDVIDNFVSAYARGETPNPCVQCNQRIKFSALSVRALMLGFDTVATGHYARLSGGRLRRAVDRGKDQSYVLAVLTAQQLRHAAFPIGDTLKRQVRAEAARRGLLVADKPDSHGICFIPSGNTRAFLSECIGIRRGSVVDADGTVLAEHDGVHGFTVGQRKGLGIVGPGPNGRPRYVTAIDADTATVYVGDAADLGVHTLIGRAPVFTAGAAPLGPVQCVVQIRAHGETAVAVVELIGDELFVRLCEPLRGVARGQTLVLYRLDPDGDEVLGSATIASMSA</sequence>
<organism>
    <name type="scientific">Mycobacterium leprae (strain Br4923)</name>
    <dbReference type="NCBI Taxonomy" id="561304"/>
    <lineage>
        <taxon>Bacteria</taxon>
        <taxon>Bacillati</taxon>
        <taxon>Actinomycetota</taxon>
        <taxon>Actinomycetes</taxon>
        <taxon>Mycobacteriales</taxon>
        <taxon>Mycobacteriaceae</taxon>
        <taxon>Mycobacterium</taxon>
    </lineage>
</organism>
<feature type="chain" id="PRO_1000198617" description="tRNA-specific 2-thiouridylase MnmA">
    <location>
        <begin position="1"/>
        <end position="358"/>
    </location>
</feature>
<feature type="region of interest" description="Interaction with tRNA" evidence="1">
    <location>
        <begin position="143"/>
        <end position="145"/>
    </location>
</feature>
<feature type="active site" description="Nucleophile" evidence="1">
    <location>
        <position position="101"/>
    </location>
</feature>
<feature type="active site" description="Cysteine persulfide intermediate" evidence="1">
    <location>
        <position position="193"/>
    </location>
</feature>
<feature type="binding site" evidence="1">
    <location>
        <begin position="6"/>
        <end position="13"/>
    </location>
    <ligand>
        <name>ATP</name>
        <dbReference type="ChEBI" id="CHEBI:30616"/>
    </ligand>
</feature>
<feature type="binding site" evidence="1">
    <location>
        <position position="32"/>
    </location>
    <ligand>
        <name>ATP</name>
        <dbReference type="ChEBI" id="CHEBI:30616"/>
    </ligand>
</feature>
<feature type="binding site" evidence="1">
    <location>
        <position position="125"/>
    </location>
    <ligand>
        <name>ATP</name>
        <dbReference type="ChEBI" id="CHEBI:30616"/>
    </ligand>
</feature>
<feature type="site" description="Interaction with tRNA" evidence="1">
    <location>
        <position position="126"/>
    </location>
</feature>
<feature type="site" description="Interaction with tRNA" evidence="1">
    <location>
        <position position="333"/>
    </location>
</feature>
<feature type="disulfide bond" description="Alternate" evidence="1">
    <location>
        <begin position="101"/>
        <end position="193"/>
    </location>
</feature>
<evidence type="ECO:0000255" key="1">
    <source>
        <dbReference type="HAMAP-Rule" id="MF_00144"/>
    </source>
</evidence>
<accession>B8ZS29</accession>
<reference key="1">
    <citation type="journal article" date="2009" name="Nat. Genet.">
        <title>Comparative genomic and phylogeographic analysis of Mycobacterium leprae.</title>
        <authorList>
            <person name="Monot M."/>
            <person name="Honore N."/>
            <person name="Garnier T."/>
            <person name="Zidane N."/>
            <person name="Sherafi D."/>
            <person name="Paniz-Mondolfi A."/>
            <person name="Matsuoka M."/>
            <person name="Taylor G.M."/>
            <person name="Donoghue H.D."/>
            <person name="Bouwman A."/>
            <person name="Mays S."/>
            <person name="Watson C."/>
            <person name="Lockwood D."/>
            <person name="Khamispour A."/>
            <person name="Dowlati Y."/>
            <person name="Jianping S."/>
            <person name="Rea T.H."/>
            <person name="Vera-Cabrera L."/>
            <person name="Stefani M.M."/>
            <person name="Banu S."/>
            <person name="Macdonald M."/>
            <person name="Sapkota B.R."/>
            <person name="Spencer J.S."/>
            <person name="Thomas J."/>
            <person name="Harshman K."/>
            <person name="Singh P."/>
            <person name="Busso P."/>
            <person name="Gattiker A."/>
            <person name="Rougemont J."/>
            <person name="Brennan P.J."/>
            <person name="Cole S.T."/>
        </authorList>
    </citation>
    <scope>NUCLEOTIDE SEQUENCE [LARGE SCALE GENOMIC DNA]</scope>
    <source>
        <strain>Br4923</strain>
    </source>
</reference>